<gene>
    <name evidence="1" type="primary">purA</name>
    <name type="ordered locus">LMOf2365_0065</name>
</gene>
<keyword id="KW-0963">Cytoplasm</keyword>
<keyword id="KW-0342">GTP-binding</keyword>
<keyword id="KW-0436">Ligase</keyword>
<keyword id="KW-0460">Magnesium</keyword>
<keyword id="KW-0479">Metal-binding</keyword>
<keyword id="KW-0547">Nucleotide-binding</keyword>
<keyword id="KW-0658">Purine biosynthesis</keyword>
<reference key="1">
    <citation type="journal article" date="2004" name="Nucleic Acids Res.">
        <title>Whole genome comparisons of serotype 4b and 1/2a strains of the food-borne pathogen Listeria monocytogenes reveal new insights into the core genome components of this species.</title>
        <authorList>
            <person name="Nelson K.E."/>
            <person name="Fouts D.E."/>
            <person name="Mongodin E.F."/>
            <person name="Ravel J."/>
            <person name="DeBoy R.T."/>
            <person name="Kolonay J.F."/>
            <person name="Rasko D.A."/>
            <person name="Angiuoli S.V."/>
            <person name="Gill S.R."/>
            <person name="Paulsen I.T."/>
            <person name="Peterson J.D."/>
            <person name="White O."/>
            <person name="Nelson W.C."/>
            <person name="Nierman W.C."/>
            <person name="Beanan M.J."/>
            <person name="Brinkac L.M."/>
            <person name="Daugherty S.C."/>
            <person name="Dodson R.J."/>
            <person name="Durkin A.S."/>
            <person name="Madupu R."/>
            <person name="Haft D.H."/>
            <person name="Selengut J."/>
            <person name="Van Aken S.E."/>
            <person name="Khouri H.M."/>
            <person name="Fedorova N."/>
            <person name="Forberger H.A."/>
            <person name="Tran B."/>
            <person name="Kathariou S."/>
            <person name="Wonderling L.D."/>
            <person name="Uhlich G.A."/>
            <person name="Bayles D.O."/>
            <person name="Luchansky J.B."/>
            <person name="Fraser C.M."/>
        </authorList>
    </citation>
    <scope>NUCLEOTIDE SEQUENCE [LARGE SCALE GENOMIC DNA]</scope>
    <source>
        <strain>F2365</strain>
    </source>
</reference>
<evidence type="ECO:0000255" key="1">
    <source>
        <dbReference type="HAMAP-Rule" id="MF_00011"/>
    </source>
</evidence>
<feature type="chain" id="PRO_0000095195" description="Adenylosuccinate synthetase">
    <location>
        <begin position="1"/>
        <end position="430"/>
    </location>
</feature>
<feature type="active site" description="Proton acceptor" evidence="1">
    <location>
        <position position="13"/>
    </location>
</feature>
<feature type="active site" description="Proton donor" evidence="1">
    <location>
        <position position="41"/>
    </location>
</feature>
<feature type="binding site" evidence="1">
    <location>
        <begin position="12"/>
        <end position="18"/>
    </location>
    <ligand>
        <name>GTP</name>
        <dbReference type="ChEBI" id="CHEBI:37565"/>
    </ligand>
</feature>
<feature type="binding site" description="in other chain" evidence="1">
    <location>
        <begin position="13"/>
        <end position="16"/>
    </location>
    <ligand>
        <name>IMP</name>
        <dbReference type="ChEBI" id="CHEBI:58053"/>
        <note>ligand shared between dimeric partners</note>
    </ligand>
</feature>
<feature type="binding site" evidence="1">
    <location>
        <position position="13"/>
    </location>
    <ligand>
        <name>Mg(2+)</name>
        <dbReference type="ChEBI" id="CHEBI:18420"/>
    </ligand>
</feature>
<feature type="binding site" description="in other chain" evidence="1">
    <location>
        <begin position="38"/>
        <end position="41"/>
    </location>
    <ligand>
        <name>IMP</name>
        <dbReference type="ChEBI" id="CHEBI:58053"/>
        <note>ligand shared between dimeric partners</note>
    </ligand>
</feature>
<feature type="binding site" evidence="1">
    <location>
        <begin position="40"/>
        <end position="42"/>
    </location>
    <ligand>
        <name>GTP</name>
        <dbReference type="ChEBI" id="CHEBI:37565"/>
    </ligand>
</feature>
<feature type="binding site" evidence="1">
    <location>
        <position position="40"/>
    </location>
    <ligand>
        <name>Mg(2+)</name>
        <dbReference type="ChEBI" id="CHEBI:18420"/>
    </ligand>
</feature>
<feature type="binding site" description="in other chain" evidence="1">
    <location>
        <position position="128"/>
    </location>
    <ligand>
        <name>IMP</name>
        <dbReference type="ChEBI" id="CHEBI:58053"/>
        <note>ligand shared between dimeric partners</note>
    </ligand>
</feature>
<feature type="binding site" evidence="1">
    <location>
        <position position="142"/>
    </location>
    <ligand>
        <name>IMP</name>
        <dbReference type="ChEBI" id="CHEBI:58053"/>
        <note>ligand shared between dimeric partners</note>
    </ligand>
</feature>
<feature type="binding site" description="in other chain" evidence="1">
    <location>
        <position position="223"/>
    </location>
    <ligand>
        <name>IMP</name>
        <dbReference type="ChEBI" id="CHEBI:58053"/>
        <note>ligand shared between dimeric partners</note>
    </ligand>
</feature>
<feature type="binding site" description="in other chain" evidence="1">
    <location>
        <position position="238"/>
    </location>
    <ligand>
        <name>IMP</name>
        <dbReference type="ChEBI" id="CHEBI:58053"/>
        <note>ligand shared between dimeric partners</note>
    </ligand>
</feature>
<feature type="binding site" evidence="1">
    <location>
        <begin position="298"/>
        <end position="304"/>
    </location>
    <ligand>
        <name>substrate</name>
    </ligand>
</feature>
<feature type="binding site" description="in other chain" evidence="1">
    <location>
        <position position="302"/>
    </location>
    <ligand>
        <name>IMP</name>
        <dbReference type="ChEBI" id="CHEBI:58053"/>
        <note>ligand shared between dimeric partners</note>
    </ligand>
</feature>
<feature type="binding site" evidence="1">
    <location>
        <position position="304"/>
    </location>
    <ligand>
        <name>GTP</name>
        <dbReference type="ChEBI" id="CHEBI:37565"/>
    </ligand>
</feature>
<feature type="binding site" evidence="1">
    <location>
        <begin position="330"/>
        <end position="332"/>
    </location>
    <ligand>
        <name>GTP</name>
        <dbReference type="ChEBI" id="CHEBI:37565"/>
    </ligand>
</feature>
<feature type="binding site" evidence="1">
    <location>
        <begin position="412"/>
        <end position="414"/>
    </location>
    <ligand>
        <name>GTP</name>
        <dbReference type="ChEBI" id="CHEBI:37565"/>
    </ligand>
</feature>
<sequence length="430" mass="47619">MSSVVVVGTQWGDEGKGKITDFLSENAEAIARYQGGNNAGHTIKFDGVTYKLHLIPSGIFYKEKISVIGNGMVVDPKALVEELKYLHDKGVDTSNLRISNRAHIILPYHIRIDEADEERKGANKIGTTKKGIGPAYMDKAARVGIRIIDLLDKETFKEKLEHNLGEKNRLLERFYELEGFKLEDILEEYYDYGQQFKEYVCDTSVVLNDALDDGKRVLFEGAQGVMLDIDQGTYPFVTSSNPIAGGVTIGSGVGPSKINHVVGVAKAYTTRVGDGPFPTELFDTIGDTIREVGHEYGTTTGRPRRVGWFDSVVVRHARRVSGLTDLSLTLLDVLTGIETLKICVAYKLDGKTITEFPASLKDLARCEPVYEELPGWTEDITGVTSLDDLPVNCRHYMERIAQLTGVQVSMFSVGPDRAQTHVIKSVWRLA</sequence>
<protein>
    <recommendedName>
        <fullName evidence="1">Adenylosuccinate synthetase</fullName>
        <shortName evidence="1">AMPSase</shortName>
        <shortName evidence="1">AdSS</shortName>
        <ecNumber evidence="1">6.3.4.4</ecNumber>
    </recommendedName>
    <alternativeName>
        <fullName evidence="1">IMP--aspartate ligase</fullName>
    </alternativeName>
</protein>
<dbReference type="EC" id="6.3.4.4" evidence="1"/>
<dbReference type="EMBL" id="AE017262">
    <property type="protein sequence ID" value="AAT02853.1"/>
    <property type="molecule type" value="Genomic_DNA"/>
</dbReference>
<dbReference type="RefSeq" id="WP_003724884.1">
    <property type="nucleotide sequence ID" value="NC_002973.6"/>
</dbReference>
<dbReference type="SMR" id="Q725A8"/>
<dbReference type="KEGG" id="lmf:LMOf2365_0065"/>
<dbReference type="HOGENOM" id="CLU_029848_0_0_9"/>
<dbReference type="UniPathway" id="UPA00075">
    <property type="reaction ID" value="UER00335"/>
</dbReference>
<dbReference type="GO" id="GO:0005737">
    <property type="term" value="C:cytoplasm"/>
    <property type="evidence" value="ECO:0007669"/>
    <property type="project" value="UniProtKB-SubCell"/>
</dbReference>
<dbReference type="GO" id="GO:0004019">
    <property type="term" value="F:adenylosuccinate synthase activity"/>
    <property type="evidence" value="ECO:0007669"/>
    <property type="project" value="UniProtKB-UniRule"/>
</dbReference>
<dbReference type="GO" id="GO:0005525">
    <property type="term" value="F:GTP binding"/>
    <property type="evidence" value="ECO:0007669"/>
    <property type="project" value="UniProtKB-UniRule"/>
</dbReference>
<dbReference type="GO" id="GO:0000287">
    <property type="term" value="F:magnesium ion binding"/>
    <property type="evidence" value="ECO:0007669"/>
    <property type="project" value="UniProtKB-UniRule"/>
</dbReference>
<dbReference type="GO" id="GO:0044208">
    <property type="term" value="P:'de novo' AMP biosynthetic process"/>
    <property type="evidence" value="ECO:0007669"/>
    <property type="project" value="UniProtKB-UniRule"/>
</dbReference>
<dbReference type="GO" id="GO:0046040">
    <property type="term" value="P:IMP metabolic process"/>
    <property type="evidence" value="ECO:0007669"/>
    <property type="project" value="TreeGrafter"/>
</dbReference>
<dbReference type="CDD" id="cd03108">
    <property type="entry name" value="AdSS"/>
    <property type="match status" value="1"/>
</dbReference>
<dbReference type="FunFam" id="1.10.300.10:FF:000001">
    <property type="entry name" value="Adenylosuccinate synthetase"/>
    <property type="match status" value="1"/>
</dbReference>
<dbReference type="FunFam" id="3.90.170.10:FF:000001">
    <property type="entry name" value="Adenylosuccinate synthetase"/>
    <property type="match status" value="1"/>
</dbReference>
<dbReference type="Gene3D" id="3.40.440.10">
    <property type="entry name" value="Adenylosuccinate Synthetase, subunit A, domain 1"/>
    <property type="match status" value="1"/>
</dbReference>
<dbReference type="Gene3D" id="1.10.300.10">
    <property type="entry name" value="Adenylosuccinate Synthetase, subunit A, domain 2"/>
    <property type="match status" value="1"/>
</dbReference>
<dbReference type="Gene3D" id="3.90.170.10">
    <property type="entry name" value="Adenylosuccinate Synthetase, subunit A, domain 3"/>
    <property type="match status" value="1"/>
</dbReference>
<dbReference type="HAMAP" id="MF_00011">
    <property type="entry name" value="Adenylosucc_synth"/>
    <property type="match status" value="1"/>
</dbReference>
<dbReference type="InterPro" id="IPR018220">
    <property type="entry name" value="Adenylosuccin_syn_GTP-bd"/>
</dbReference>
<dbReference type="InterPro" id="IPR033128">
    <property type="entry name" value="Adenylosuccin_syn_Lys_AS"/>
</dbReference>
<dbReference type="InterPro" id="IPR042109">
    <property type="entry name" value="Adenylosuccinate_synth_dom1"/>
</dbReference>
<dbReference type="InterPro" id="IPR042110">
    <property type="entry name" value="Adenylosuccinate_synth_dom2"/>
</dbReference>
<dbReference type="InterPro" id="IPR042111">
    <property type="entry name" value="Adenylosuccinate_synth_dom3"/>
</dbReference>
<dbReference type="InterPro" id="IPR001114">
    <property type="entry name" value="Adenylosuccinate_synthetase"/>
</dbReference>
<dbReference type="InterPro" id="IPR027417">
    <property type="entry name" value="P-loop_NTPase"/>
</dbReference>
<dbReference type="NCBIfam" id="NF002223">
    <property type="entry name" value="PRK01117.1"/>
    <property type="match status" value="1"/>
</dbReference>
<dbReference type="NCBIfam" id="TIGR00184">
    <property type="entry name" value="purA"/>
    <property type="match status" value="1"/>
</dbReference>
<dbReference type="PANTHER" id="PTHR11846">
    <property type="entry name" value="ADENYLOSUCCINATE SYNTHETASE"/>
    <property type="match status" value="1"/>
</dbReference>
<dbReference type="PANTHER" id="PTHR11846:SF0">
    <property type="entry name" value="ADENYLOSUCCINATE SYNTHETASE"/>
    <property type="match status" value="1"/>
</dbReference>
<dbReference type="Pfam" id="PF00709">
    <property type="entry name" value="Adenylsucc_synt"/>
    <property type="match status" value="1"/>
</dbReference>
<dbReference type="SMART" id="SM00788">
    <property type="entry name" value="Adenylsucc_synt"/>
    <property type="match status" value="1"/>
</dbReference>
<dbReference type="SUPFAM" id="SSF52540">
    <property type="entry name" value="P-loop containing nucleoside triphosphate hydrolases"/>
    <property type="match status" value="1"/>
</dbReference>
<dbReference type="PROSITE" id="PS01266">
    <property type="entry name" value="ADENYLOSUCCIN_SYN_1"/>
    <property type="match status" value="1"/>
</dbReference>
<dbReference type="PROSITE" id="PS00513">
    <property type="entry name" value="ADENYLOSUCCIN_SYN_2"/>
    <property type="match status" value="1"/>
</dbReference>
<comment type="function">
    <text evidence="1">Plays an important role in the de novo pathway of purine nucleotide biosynthesis. Catalyzes the first committed step in the biosynthesis of AMP from IMP.</text>
</comment>
<comment type="catalytic activity">
    <reaction evidence="1">
        <text>IMP + L-aspartate + GTP = N(6)-(1,2-dicarboxyethyl)-AMP + GDP + phosphate + 2 H(+)</text>
        <dbReference type="Rhea" id="RHEA:15753"/>
        <dbReference type="ChEBI" id="CHEBI:15378"/>
        <dbReference type="ChEBI" id="CHEBI:29991"/>
        <dbReference type="ChEBI" id="CHEBI:37565"/>
        <dbReference type="ChEBI" id="CHEBI:43474"/>
        <dbReference type="ChEBI" id="CHEBI:57567"/>
        <dbReference type="ChEBI" id="CHEBI:58053"/>
        <dbReference type="ChEBI" id="CHEBI:58189"/>
        <dbReference type="EC" id="6.3.4.4"/>
    </reaction>
</comment>
<comment type="cofactor">
    <cofactor evidence="1">
        <name>Mg(2+)</name>
        <dbReference type="ChEBI" id="CHEBI:18420"/>
    </cofactor>
    <text evidence="1">Binds 1 Mg(2+) ion per subunit.</text>
</comment>
<comment type="pathway">
    <text evidence="1">Purine metabolism; AMP biosynthesis via de novo pathway; AMP from IMP: step 1/2.</text>
</comment>
<comment type="subunit">
    <text evidence="1">Homodimer.</text>
</comment>
<comment type="subcellular location">
    <subcellularLocation>
        <location evidence="1">Cytoplasm</location>
    </subcellularLocation>
</comment>
<comment type="similarity">
    <text evidence="1">Belongs to the adenylosuccinate synthetase family.</text>
</comment>
<name>PURA_LISMF</name>
<proteinExistence type="inferred from homology"/>
<organism>
    <name type="scientific">Listeria monocytogenes serotype 4b (strain F2365)</name>
    <dbReference type="NCBI Taxonomy" id="265669"/>
    <lineage>
        <taxon>Bacteria</taxon>
        <taxon>Bacillati</taxon>
        <taxon>Bacillota</taxon>
        <taxon>Bacilli</taxon>
        <taxon>Bacillales</taxon>
        <taxon>Listeriaceae</taxon>
        <taxon>Listeria</taxon>
    </lineage>
</organism>
<accession>Q725A8</accession>